<protein>
    <recommendedName>
        <fullName>Trans-aconitate 3-methyltransferase</fullName>
        <ecNumber>2.1.1.145</ecNumber>
    </recommendedName>
</protein>
<keyword id="KW-0007">Acetylation</keyword>
<keyword id="KW-0963">Cytoplasm</keyword>
<keyword id="KW-0489">Methyltransferase</keyword>
<keyword id="KW-0949">S-adenosyl-L-methionine</keyword>
<keyword id="KW-0808">Transferase</keyword>
<feature type="initiator methionine" description="Removed" evidence="2">
    <location>
        <position position="1"/>
    </location>
</feature>
<feature type="chain" id="PRO_0000324944" description="Trans-aconitate 3-methyltransferase">
    <location>
        <begin position="2"/>
        <end position="299"/>
    </location>
</feature>
<feature type="modified residue" description="N-acetylserine" evidence="2">
    <location>
        <position position="2"/>
    </location>
</feature>
<dbReference type="EC" id="2.1.1.145"/>
<dbReference type="EMBL" id="AAFW02000048">
    <property type="protein sequence ID" value="EDN63151.1"/>
    <property type="molecule type" value="Genomic_DNA"/>
</dbReference>
<dbReference type="SMR" id="A6ZRD1"/>
<dbReference type="HOGENOM" id="CLU_049344_1_2_1"/>
<dbReference type="Proteomes" id="UP000007060">
    <property type="component" value="Unassembled WGS sequence"/>
</dbReference>
<dbReference type="GO" id="GO:0005737">
    <property type="term" value="C:cytoplasm"/>
    <property type="evidence" value="ECO:0007669"/>
    <property type="project" value="UniProtKB-SubCell"/>
</dbReference>
<dbReference type="GO" id="GO:0046547">
    <property type="term" value="F:trans-aconitate 3-methyltransferase activity"/>
    <property type="evidence" value="ECO:0007669"/>
    <property type="project" value="UniProtKB-EC"/>
</dbReference>
<dbReference type="GO" id="GO:0032259">
    <property type="term" value="P:methylation"/>
    <property type="evidence" value="ECO:0007669"/>
    <property type="project" value="UniProtKB-KW"/>
</dbReference>
<dbReference type="CDD" id="cd02440">
    <property type="entry name" value="AdoMet_MTases"/>
    <property type="match status" value="1"/>
</dbReference>
<dbReference type="FunFam" id="3.40.50.150:FF:000480">
    <property type="entry name" value="Trans-aconitate 3-methyltransferase"/>
    <property type="match status" value="1"/>
</dbReference>
<dbReference type="Gene3D" id="3.40.50.150">
    <property type="entry name" value="Vaccinia Virus protein VP39"/>
    <property type="match status" value="1"/>
</dbReference>
<dbReference type="InterPro" id="IPR051052">
    <property type="entry name" value="Diverse_substrate_MTase"/>
</dbReference>
<dbReference type="InterPro" id="IPR025714">
    <property type="entry name" value="Methyltranfer_dom"/>
</dbReference>
<dbReference type="InterPro" id="IPR029063">
    <property type="entry name" value="SAM-dependent_MTases_sf"/>
</dbReference>
<dbReference type="PANTHER" id="PTHR44942">
    <property type="entry name" value="METHYLTRANSF_11 DOMAIN-CONTAINING PROTEIN"/>
    <property type="match status" value="1"/>
</dbReference>
<dbReference type="PANTHER" id="PTHR44942:SF4">
    <property type="entry name" value="METHYLTRANSFERASE TYPE 11 DOMAIN-CONTAINING PROTEIN"/>
    <property type="match status" value="1"/>
</dbReference>
<dbReference type="Pfam" id="PF13847">
    <property type="entry name" value="Methyltransf_31"/>
    <property type="match status" value="1"/>
</dbReference>
<dbReference type="SUPFAM" id="SSF53335">
    <property type="entry name" value="S-adenosyl-L-methionine-dependent methyltransferases"/>
    <property type="match status" value="1"/>
</dbReference>
<name>TMT1_YEAS7</name>
<sequence length="299" mass="34800">MSTFSASDFNSERYSSSRPSYPSDFYKMIDEYHDGERKLLVDVGCGPGTATLQMAQELKPFEQIIGSDLSATMIKTAEVIKEGSPDTYKNVSFKISSSDDFKFLGADSVDKQKIDMITAVECAHWFDFEKFQRSAYANLRKDGTIAIWGYADPIFPDYPEFDDLMIEVPYGKQGLGPYWEQPGRSRLRNMLKDSHLDPELFHDIQVSYFCAEDVRDKVKLHQHTKKPLLIRKQVTLMEFADYVRTWSAYHQWKQDPKNKDKEDVADWFIKESLRRRPELSTNTKIEVVWNTFYKLGKRV</sequence>
<gene>
    <name type="primary">TMT1</name>
    <name type="synonym">TAM1</name>
    <name type="ORF">SCY_1678</name>
</gene>
<evidence type="ECO:0000250" key="1"/>
<evidence type="ECO:0000250" key="2">
    <source>
        <dbReference type="UniProtKB" id="P32643"/>
    </source>
</evidence>
<evidence type="ECO:0000305" key="3"/>
<accession>A6ZRD1</accession>
<reference key="1">
    <citation type="journal article" date="2007" name="Proc. Natl. Acad. Sci. U.S.A.">
        <title>Genome sequencing and comparative analysis of Saccharomyces cerevisiae strain YJM789.</title>
        <authorList>
            <person name="Wei W."/>
            <person name="McCusker J.H."/>
            <person name="Hyman R.W."/>
            <person name="Jones T."/>
            <person name="Ning Y."/>
            <person name="Cao Z."/>
            <person name="Gu Z."/>
            <person name="Bruno D."/>
            <person name="Miranda M."/>
            <person name="Nguyen M."/>
            <person name="Wilhelmy J."/>
            <person name="Komp C."/>
            <person name="Tamse R."/>
            <person name="Wang X."/>
            <person name="Jia P."/>
            <person name="Luedi P."/>
            <person name="Oefner P.J."/>
            <person name="David L."/>
            <person name="Dietrich F.S."/>
            <person name="Li Y."/>
            <person name="Davis R.W."/>
            <person name="Steinmetz L.M."/>
        </authorList>
    </citation>
    <scope>NUCLEOTIDE SEQUENCE [LARGE SCALE GENOMIC DNA]</scope>
    <source>
        <strain>YJM789</strain>
    </source>
</reference>
<comment type="function">
    <text evidence="1">Catalyzes the S-adenosylmethionine monomethyl esterification of trans-aconitate and 3-isopropylmalate at high affinity and of other molecules like cis-aconitate, isocitrate, and citrate at lower velocities and affinities. The function of trans-aconitate methylation appears to be in reducing the toxicity of this spontaneous breakdown product of cis-aconitate. The role of 3-isopropylmalate methylation is unclear but may represent a metabolic branch at 3-isopropylmalate, where some of the material is taken in the pathway leading to leucine and some is taken in a pathway to the 3-isopropylmalate methyl ester, a molecule that provides a signal to switch from vegetative to invasive growth in response to amino acid starvation (By similarity).</text>
</comment>
<comment type="catalytic activity">
    <reaction>
        <text>trans-aconitate + S-adenosyl-L-methionine = (E)-2-(methoxycarbonylmethyl)but-2-enedioate + S-adenosyl-L-homocysteine</text>
        <dbReference type="Rhea" id="RHEA:22200"/>
        <dbReference type="ChEBI" id="CHEBI:15708"/>
        <dbReference type="ChEBI" id="CHEBI:57469"/>
        <dbReference type="ChEBI" id="CHEBI:57856"/>
        <dbReference type="ChEBI" id="CHEBI:59789"/>
        <dbReference type="EC" id="2.1.1.145"/>
    </reaction>
</comment>
<comment type="subcellular location">
    <subcellularLocation>
        <location evidence="1">Cytoplasm</location>
    </subcellularLocation>
</comment>
<comment type="induction">
    <text evidence="1">During amino acid starvation.</text>
</comment>
<comment type="similarity">
    <text evidence="3">Belongs to the methyltransferase superfamily. Tam family.</text>
</comment>
<proteinExistence type="inferred from homology"/>
<organism>
    <name type="scientific">Saccharomyces cerevisiae (strain YJM789)</name>
    <name type="common">Baker's yeast</name>
    <dbReference type="NCBI Taxonomy" id="307796"/>
    <lineage>
        <taxon>Eukaryota</taxon>
        <taxon>Fungi</taxon>
        <taxon>Dikarya</taxon>
        <taxon>Ascomycota</taxon>
        <taxon>Saccharomycotina</taxon>
        <taxon>Saccharomycetes</taxon>
        <taxon>Saccharomycetales</taxon>
        <taxon>Saccharomycetaceae</taxon>
        <taxon>Saccharomyces</taxon>
    </lineage>
</organism>